<name>POTA_TREPA</name>
<dbReference type="EC" id="7.6.2.11" evidence="1"/>
<dbReference type="EMBL" id="AE000520">
    <property type="protein sequence ID" value="AAC65627.1"/>
    <property type="molecule type" value="Genomic_DNA"/>
</dbReference>
<dbReference type="PIR" id="E71296">
    <property type="entry name" value="E71296"/>
</dbReference>
<dbReference type="SMR" id="O83658"/>
<dbReference type="STRING" id="243276.TP_0652"/>
<dbReference type="EnsemblBacteria" id="AAC65627">
    <property type="protein sequence ID" value="AAC65627"/>
    <property type="gene ID" value="TP_0652"/>
</dbReference>
<dbReference type="KEGG" id="tpa:TP_0652"/>
<dbReference type="KEGG" id="tpw:TPANIC_0652"/>
<dbReference type="eggNOG" id="COG3842">
    <property type="taxonomic scope" value="Bacteria"/>
</dbReference>
<dbReference type="HOGENOM" id="CLU_000604_1_1_12"/>
<dbReference type="Proteomes" id="UP000000811">
    <property type="component" value="Chromosome"/>
</dbReference>
<dbReference type="GO" id="GO:0043190">
    <property type="term" value="C:ATP-binding cassette (ABC) transporter complex"/>
    <property type="evidence" value="ECO:0007669"/>
    <property type="project" value="InterPro"/>
</dbReference>
<dbReference type="GO" id="GO:0015594">
    <property type="term" value="F:ABC-type putrescine transporter activity"/>
    <property type="evidence" value="ECO:0007669"/>
    <property type="project" value="InterPro"/>
</dbReference>
<dbReference type="GO" id="GO:0005524">
    <property type="term" value="F:ATP binding"/>
    <property type="evidence" value="ECO:0007669"/>
    <property type="project" value="UniProtKB-KW"/>
</dbReference>
<dbReference type="GO" id="GO:0016887">
    <property type="term" value="F:ATP hydrolysis activity"/>
    <property type="evidence" value="ECO:0007669"/>
    <property type="project" value="InterPro"/>
</dbReference>
<dbReference type="CDD" id="cd03300">
    <property type="entry name" value="ABC_PotA_N"/>
    <property type="match status" value="1"/>
</dbReference>
<dbReference type="FunFam" id="3.40.50.300:FF:000425">
    <property type="entry name" value="Probable ABC transporter, ATP-binding subunit"/>
    <property type="match status" value="1"/>
</dbReference>
<dbReference type="Gene3D" id="2.40.50.100">
    <property type="match status" value="1"/>
</dbReference>
<dbReference type="Gene3D" id="3.40.50.300">
    <property type="entry name" value="P-loop containing nucleotide triphosphate hydrolases"/>
    <property type="match status" value="1"/>
</dbReference>
<dbReference type="InterPro" id="IPR003593">
    <property type="entry name" value="AAA+_ATPase"/>
</dbReference>
<dbReference type="InterPro" id="IPR050093">
    <property type="entry name" value="ABC_SmlMolc_Importer"/>
</dbReference>
<dbReference type="InterPro" id="IPR003439">
    <property type="entry name" value="ABC_transporter-like_ATP-bd"/>
</dbReference>
<dbReference type="InterPro" id="IPR017871">
    <property type="entry name" value="ABC_transporter-like_CS"/>
</dbReference>
<dbReference type="InterPro" id="IPR008995">
    <property type="entry name" value="Mo/tungstate-bd_C_term_dom"/>
</dbReference>
<dbReference type="InterPro" id="IPR027417">
    <property type="entry name" value="P-loop_NTPase"/>
</dbReference>
<dbReference type="InterPro" id="IPR005893">
    <property type="entry name" value="PotA-like"/>
</dbReference>
<dbReference type="InterPro" id="IPR017879">
    <property type="entry name" value="PotA_ATP-bd"/>
</dbReference>
<dbReference type="InterPro" id="IPR013611">
    <property type="entry name" value="Transp-assoc_OB_typ2"/>
</dbReference>
<dbReference type="NCBIfam" id="TIGR01187">
    <property type="entry name" value="potA"/>
    <property type="match status" value="1"/>
</dbReference>
<dbReference type="PANTHER" id="PTHR42781">
    <property type="entry name" value="SPERMIDINE/PUTRESCINE IMPORT ATP-BINDING PROTEIN POTA"/>
    <property type="match status" value="1"/>
</dbReference>
<dbReference type="PANTHER" id="PTHR42781:SF4">
    <property type="entry name" value="SPERMIDINE_PUTRESCINE IMPORT ATP-BINDING PROTEIN POTA"/>
    <property type="match status" value="1"/>
</dbReference>
<dbReference type="Pfam" id="PF00005">
    <property type="entry name" value="ABC_tran"/>
    <property type="match status" value="1"/>
</dbReference>
<dbReference type="Pfam" id="PF08402">
    <property type="entry name" value="TOBE_2"/>
    <property type="match status" value="1"/>
</dbReference>
<dbReference type="SMART" id="SM00382">
    <property type="entry name" value="AAA"/>
    <property type="match status" value="1"/>
</dbReference>
<dbReference type="SUPFAM" id="SSF50331">
    <property type="entry name" value="MOP-like"/>
    <property type="match status" value="1"/>
</dbReference>
<dbReference type="SUPFAM" id="SSF52540">
    <property type="entry name" value="P-loop containing nucleoside triphosphate hydrolases"/>
    <property type="match status" value="1"/>
</dbReference>
<dbReference type="PROSITE" id="PS00211">
    <property type="entry name" value="ABC_TRANSPORTER_1"/>
    <property type="match status" value="1"/>
</dbReference>
<dbReference type="PROSITE" id="PS50893">
    <property type="entry name" value="ABC_TRANSPORTER_2"/>
    <property type="match status" value="1"/>
</dbReference>
<dbReference type="PROSITE" id="PS51305">
    <property type="entry name" value="POTA"/>
    <property type="match status" value="1"/>
</dbReference>
<feature type="chain" id="PRO_0000286320" description="Spermidine/putrescine import ATP-binding protein PotA">
    <location>
        <begin position="1"/>
        <end position="379"/>
    </location>
</feature>
<feature type="domain" description="ABC transporter" evidence="1">
    <location>
        <begin position="10"/>
        <end position="240"/>
    </location>
</feature>
<feature type="binding site" evidence="1">
    <location>
        <begin position="42"/>
        <end position="49"/>
    </location>
    <ligand>
        <name>ATP</name>
        <dbReference type="ChEBI" id="CHEBI:30616"/>
    </ligand>
</feature>
<keyword id="KW-0067">ATP-binding</keyword>
<keyword id="KW-0997">Cell inner membrane</keyword>
<keyword id="KW-1003">Cell membrane</keyword>
<keyword id="KW-0472">Membrane</keyword>
<keyword id="KW-0547">Nucleotide-binding</keyword>
<keyword id="KW-1185">Reference proteome</keyword>
<keyword id="KW-1278">Translocase</keyword>
<keyword id="KW-0813">Transport</keyword>
<comment type="function">
    <text evidence="1">Part of the ABC transporter complex PotABCD involved in spermidine/putrescine import. Responsible for energy coupling to the transport system.</text>
</comment>
<comment type="catalytic activity">
    <reaction evidence="1">
        <text>ATP + H2O + polyamine-[polyamine-binding protein]Side 1 = ADP + phosphate + polyamineSide 2 + [polyamine-binding protein]Side 1.</text>
        <dbReference type="EC" id="7.6.2.11"/>
    </reaction>
</comment>
<comment type="subunit">
    <text evidence="1">The complex is composed of two ATP-binding proteins (PotA), two transmembrane proteins (PotB and PotC) and a solute-binding protein (PotD).</text>
</comment>
<comment type="subcellular location">
    <subcellularLocation>
        <location evidence="1">Cell inner membrane</location>
        <topology evidence="1">Peripheral membrane protein</topology>
    </subcellularLocation>
</comment>
<comment type="similarity">
    <text evidence="1">Belongs to the ABC transporter superfamily. Spermidine/putrescine importer (TC 3.A.1.11.1) family.</text>
</comment>
<evidence type="ECO:0000255" key="1">
    <source>
        <dbReference type="HAMAP-Rule" id="MF_01726"/>
    </source>
</evidence>
<accession>O83658</accession>
<protein>
    <recommendedName>
        <fullName evidence="1">Spermidine/putrescine import ATP-binding protein PotA</fullName>
        <ecNumber evidence="1">7.6.2.11</ecNumber>
    </recommendedName>
</protein>
<proteinExistence type="inferred from homology"/>
<reference key="1">
    <citation type="journal article" date="1998" name="Science">
        <title>Complete genome sequence of Treponema pallidum, the syphilis spirochete.</title>
        <authorList>
            <person name="Fraser C.M."/>
            <person name="Norris S.J."/>
            <person name="Weinstock G.M."/>
            <person name="White O."/>
            <person name="Sutton G.G."/>
            <person name="Dodson R.J."/>
            <person name="Gwinn M.L."/>
            <person name="Hickey E.K."/>
            <person name="Clayton R.A."/>
            <person name="Ketchum K.A."/>
            <person name="Sodergren E."/>
            <person name="Hardham J.M."/>
            <person name="McLeod M.P."/>
            <person name="Salzberg S.L."/>
            <person name="Peterson J.D."/>
            <person name="Khalak H.G."/>
            <person name="Richardson D.L."/>
            <person name="Howell J.K."/>
            <person name="Chidambaram M."/>
            <person name="Utterback T.R."/>
            <person name="McDonald L.A."/>
            <person name="Artiach P."/>
            <person name="Bowman C."/>
            <person name="Cotton M.D."/>
            <person name="Fujii C."/>
            <person name="Garland S.A."/>
            <person name="Hatch B."/>
            <person name="Horst K."/>
            <person name="Roberts K.M."/>
            <person name="Sandusky M."/>
            <person name="Weidman J.F."/>
            <person name="Smith H.O."/>
            <person name="Venter J.C."/>
        </authorList>
    </citation>
    <scope>NUCLEOTIDE SEQUENCE [LARGE SCALE GENOMIC DNA]</scope>
    <source>
        <strain>Nichols</strain>
    </source>
</reference>
<organism>
    <name type="scientific">Treponema pallidum (strain Nichols)</name>
    <dbReference type="NCBI Taxonomy" id="243276"/>
    <lineage>
        <taxon>Bacteria</taxon>
        <taxon>Pseudomonadati</taxon>
        <taxon>Spirochaetota</taxon>
        <taxon>Spirochaetia</taxon>
        <taxon>Spirochaetales</taxon>
        <taxon>Treponemataceae</taxon>
        <taxon>Treponema</taxon>
    </lineage>
</organism>
<gene>
    <name evidence="1" type="primary">potA</name>
    <name type="ordered locus">TP_0652</name>
</gene>
<sequence length="379" mass="42323">MRQTVKGCAVTIDQVSKAYGHCLAVDRATVHIRQGEFFSILGPSGCGKTTLLRIIAGFEQPDSGDLTFDHVSVLGVGANKRRSNTVFQSYALFPHLSVYENIAFPLRLKRLSKNLIRERVHEYLHLVQLDEHLHKKPHQLSGGQQQRVAIARALVCEPGVLLLDEPLSALDAKLRSNLLIELDTLHDQTGITFVFITHDQSEALSVSDRIAVMNKGKILQIGTPYEIYEQPATDFVAKFIGETNSFLSTVVSCTAIENEEFMLSLQVPELDRTLTVTADNPIDPGRRVCFTVRPEKIHISLEEPGTTSAPLNVFRGFVEEPVYAGFQSKFFVQLESGAIIQVFQQHQKYLDTGPEIAWKDTVYVSWSAHDGYVVEDIES</sequence>